<evidence type="ECO:0000255" key="1">
    <source>
        <dbReference type="PROSITE-ProRule" id="PRU00176"/>
    </source>
</evidence>
<evidence type="ECO:0000255" key="2">
    <source>
        <dbReference type="PROSITE-ProRule" id="PRU00723"/>
    </source>
</evidence>
<evidence type="ECO:0000256" key="3">
    <source>
        <dbReference type="SAM" id="MobiDB-lite"/>
    </source>
</evidence>
<evidence type="ECO:0000269" key="4">
    <source>
    </source>
</evidence>
<evidence type="ECO:0000269" key="5">
    <source>
    </source>
</evidence>
<evidence type="ECO:0000269" key="6">
    <source>
    </source>
</evidence>
<evidence type="ECO:0000269" key="7">
    <source>
    </source>
</evidence>
<evidence type="ECO:0000269" key="8">
    <source>
    </source>
</evidence>
<evidence type="ECO:0007744" key="9">
    <source>
    </source>
</evidence>
<evidence type="ECO:0007744" key="10">
    <source>
    </source>
</evidence>
<evidence type="ECO:0007744" key="11">
    <source>
    </source>
</evidence>
<evidence type="ECO:0007744" key="12">
    <source>
    </source>
</evidence>
<evidence type="ECO:0007744" key="13">
    <source>
    </source>
</evidence>
<evidence type="ECO:0007744" key="14">
    <source>
    </source>
</evidence>
<sequence length="482" mass="58045">MAAPEKMTFPEKPSHKKYRAALKKEKRKKRRQELARLRDSGLSQKEEEEDTFIEEQQLEEEKLLERERQRLHEEWLLREQKAQEEFRIKKEKEEAAKKRQEEQERKLKEQWEEQQRKEREEEEQKRQEKKEKEEALQKMLDQAENELENGTTWQNPEPPVDFRVMEKDRANCPFYSKTGACRFGDRCSRKHNFPTSSPTLLIKSMFTTFGMEQCRRDDYDPDASLEYSEEETYQQFLDFYEDVLPEFKNVGKVIQFKVSCNLEPHLRGNVYVQYQSEEECQAALSLFNGRWYAGRQLQCEFCPVTRWKMAICGLFEIQQCPRGKHCNFLHVFRNPNNEFWEANRDIYLSPDRTGSSFGKNSERRERMGHHDDYYSRLRGRRNPSPDHSYKRNGESERKSSRHRGKKSHKRTSKSRERHNSRSRGRNRDRSRDRSRGRGSRSRSRSRSRRSRRSRSQSSSRSRSRGRRRSGNRDRTVQSPKSK</sequence>
<protein>
    <recommendedName>
        <fullName>U2 small nuclear ribonucleoprotein auxiliary factor 35 kDa subunit-related protein 2</fullName>
    </recommendedName>
    <alternativeName>
        <fullName>CCCH type zinc finger, RNA-binding motif and serine/arginine rich protein 2</fullName>
    </alternativeName>
    <alternativeName>
        <fullName>Renal carcinoma antigen NY-REN-20</fullName>
    </alternativeName>
    <alternativeName>
        <fullName>U2(RNU2) small nuclear RNA auxiliary factor 1-like 2</fullName>
    </alternativeName>
    <alternativeName>
        <fullName>U2AF35-related protein</fullName>
        <shortName>URP</shortName>
    </alternativeName>
</protein>
<gene>
    <name type="primary">ZRSR2</name>
    <name type="synonym">U2AF1-RS2</name>
    <name type="synonym">U2AF1L2</name>
    <name type="synonym">U2AF1RS2</name>
    <name type="synonym">URP</name>
</gene>
<dbReference type="EMBL" id="D49677">
    <property type="protein sequence ID" value="BAA08533.1"/>
    <property type="molecule type" value="mRNA"/>
</dbReference>
<dbReference type="EMBL" id="AC004106">
    <property type="status" value="NOT_ANNOTATED_CDS"/>
    <property type="molecule type" value="Genomic_DNA"/>
</dbReference>
<dbReference type="EMBL" id="AC096510">
    <property type="status" value="NOT_ANNOTATED_CDS"/>
    <property type="molecule type" value="Genomic_DNA"/>
</dbReference>
<dbReference type="EMBL" id="BC113454">
    <property type="protein sequence ID" value="AAI13455.1"/>
    <property type="molecule type" value="mRNA"/>
</dbReference>
<dbReference type="EMBL" id="BC113480">
    <property type="protein sequence ID" value="AAI13481.1"/>
    <property type="molecule type" value="mRNA"/>
</dbReference>
<dbReference type="CCDS" id="CCDS14172.1"/>
<dbReference type="RefSeq" id="NP_005080.1">
    <property type="nucleotide sequence ID" value="NM_005089.4"/>
</dbReference>
<dbReference type="SMR" id="Q15696"/>
<dbReference type="BioGRID" id="113865">
    <property type="interactions" value="80"/>
</dbReference>
<dbReference type="CORUM" id="Q15696"/>
<dbReference type="DIP" id="DIP-62117N"/>
<dbReference type="FunCoup" id="Q15696">
    <property type="interactions" value="1213"/>
</dbReference>
<dbReference type="IntAct" id="Q15696">
    <property type="interactions" value="60"/>
</dbReference>
<dbReference type="STRING" id="9606.ENSP00000303015"/>
<dbReference type="GlyGen" id="Q15696">
    <property type="glycosylation" value="1 site, 1 O-linked glycan (1 site)"/>
</dbReference>
<dbReference type="iPTMnet" id="Q15696"/>
<dbReference type="PhosphoSitePlus" id="Q15696"/>
<dbReference type="BioMuta" id="ZRSR2"/>
<dbReference type="DMDM" id="2833266"/>
<dbReference type="jPOST" id="Q15696"/>
<dbReference type="MassIVE" id="Q15696"/>
<dbReference type="PaxDb" id="9606-ENSP00000303015"/>
<dbReference type="PeptideAtlas" id="Q15696"/>
<dbReference type="ProteomicsDB" id="60704"/>
<dbReference type="Pumba" id="Q15696"/>
<dbReference type="Antibodypedia" id="8950">
    <property type="antibodies" value="100 antibodies from 21 providers"/>
</dbReference>
<dbReference type="DNASU" id="8233"/>
<dbReference type="Ensembl" id="ENST00000307771.8">
    <property type="protein sequence ID" value="ENSP00000303015.7"/>
    <property type="gene ID" value="ENSG00000169249.14"/>
</dbReference>
<dbReference type="GeneID" id="8233"/>
<dbReference type="KEGG" id="hsa:8233"/>
<dbReference type="MANE-Select" id="ENST00000307771.8">
    <property type="protein sequence ID" value="ENSP00000303015.7"/>
    <property type="RefSeq nucleotide sequence ID" value="NM_005089.4"/>
    <property type="RefSeq protein sequence ID" value="NP_005080.1"/>
</dbReference>
<dbReference type="UCSC" id="uc004cxg.5">
    <property type="organism name" value="human"/>
</dbReference>
<dbReference type="AGR" id="HGNC:23019"/>
<dbReference type="CTD" id="8233"/>
<dbReference type="DisGeNET" id="8233"/>
<dbReference type="GeneCards" id="ZRSR2"/>
<dbReference type="HGNC" id="HGNC:23019">
    <property type="gene designation" value="ZRSR2"/>
</dbReference>
<dbReference type="HPA" id="ENSG00000169249">
    <property type="expression patterns" value="Low tissue specificity"/>
</dbReference>
<dbReference type="MalaCards" id="ZRSR2"/>
<dbReference type="MIM" id="300028">
    <property type="type" value="gene"/>
</dbReference>
<dbReference type="MIM" id="301132">
    <property type="type" value="phenotype"/>
</dbReference>
<dbReference type="neXtProt" id="NX_Q15696"/>
<dbReference type="OpenTargets" id="ENSG00000169249"/>
<dbReference type="PharmGKB" id="PA162410930"/>
<dbReference type="VEuPathDB" id="HostDB:ENSG00000169249"/>
<dbReference type="eggNOG" id="KOG2202">
    <property type="taxonomic scope" value="Eukaryota"/>
</dbReference>
<dbReference type="GeneTree" id="ENSGT00950000183152"/>
<dbReference type="HOGENOM" id="CLU_029117_1_0_1"/>
<dbReference type="InParanoid" id="Q15696"/>
<dbReference type="OMA" id="MDLRIME"/>
<dbReference type="OrthoDB" id="75923at2759"/>
<dbReference type="PAN-GO" id="Q15696">
    <property type="GO annotations" value="4 GO annotations based on evolutionary models"/>
</dbReference>
<dbReference type="PhylomeDB" id="Q15696"/>
<dbReference type="TreeFam" id="TF324447"/>
<dbReference type="PathwayCommons" id="Q15696"/>
<dbReference type="Reactome" id="R-HSA-72165">
    <property type="pathway name" value="mRNA Splicing - Minor Pathway"/>
</dbReference>
<dbReference type="SignaLink" id="Q15696"/>
<dbReference type="SIGNOR" id="Q15696"/>
<dbReference type="BioGRID-ORCS" id="8233">
    <property type="hits" value="193 hits in 789 CRISPR screens"/>
</dbReference>
<dbReference type="ChiTaRS" id="ZRSR2">
    <property type="organism name" value="human"/>
</dbReference>
<dbReference type="GeneWiki" id="ZRSR2"/>
<dbReference type="GenomeRNAi" id="8233"/>
<dbReference type="Pharos" id="Q15696">
    <property type="development level" value="Tbio"/>
</dbReference>
<dbReference type="PRO" id="PR:Q15696"/>
<dbReference type="Proteomes" id="UP000005640">
    <property type="component" value="Chromosome X"/>
</dbReference>
<dbReference type="RNAct" id="Q15696">
    <property type="molecule type" value="protein"/>
</dbReference>
<dbReference type="Bgee" id="ENSG00000169249">
    <property type="expression patterns" value="Expressed in sural nerve and 208 other cell types or tissues"/>
</dbReference>
<dbReference type="ExpressionAtlas" id="Q15696">
    <property type="expression patterns" value="baseline and differential"/>
</dbReference>
<dbReference type="GO" id="GO:0005654">
    <property type="term" value="C:nucleoplasm"/>
    <property type="evidence" value="ECO:0000304"/>
    <property type="project" value="Reactome"/>
</dbReference>
<dbReference type="GO" id="GO:0005681">
    <property type="term" value="C:spliceosomal complex"/>
    <property type="evidence" value="ECO:0000318"/>
    <property type="project" value="GO_Central"/>
</dbReference>
<dbReference type="GO" id="GO:0005689">
    <property type="term" value="C:U12-type spliceosomal complex"/>
    <property type="evidence" value="ECO:0000314"/>
    <property type="project" value="UniProtKB"/>
</dbReference>
<dbReference type="GO" id="GO:0089701">
    <property type="term" value="C:U2AF complex"/>
    <property type="evidence" value="ECO:0000318"/>
    <property type="project" value="GO_Central"/>
</dbReference>
<dbReference type="GO" id="GO:0042802">
    <property type="term" value="F:identical protein binding"/>
    <property type="evidence" value="ECO:0000353"/>
    <property type="project" value="IntAct"/>
</dbReference>
<dbReference type="GO" id="GO:0030628">
    <property type="term" value="F:pre-mRNA 3'-splice site binding"/>
    <property type="evidence" value="ECO:0000314"/>
    <property type="project" value="UniProtKB"/>
</dbReference>
<dbReference type="GO" id="GO:0008270">
    <property type="term" value="F:zinc ion binding"/>
    <property type="evidence" value="ECO:0007669"/>
    <property type="project" value="UniProtKB-KW"/>
</dbReference>
<dbReference type="GO" id="GO:0000398">
    <property type="term" value="P:mRNA splicing, via spliceosome"/>
    <property type="evidence" value="ECO:0000315"/>
    <property type="project" value="UniProtKB"/>
</dbReference>
<dbReference type="GO" id="GO:0008380">
    <property type="term" value="P:RNA splicing"/>
    <property type="evidence" value="ECO:0000305"/>
    <property type="project" value="HGNC-UCL"/>
</dbReference>
<dbReference type="GO" id="GO:0000245">
    <property type="term" value="P:spliceosomal complex assembly"/>
    <property type="evidence" value="ECO:0000315"/>
    <property type="project" value="UniProtKB"/>
</dbReference>
<dbReference type="CDD" id="cd12540">
    <property type="entry name" value="RRM_U2AFBPL"/>
    <property type="match status" value="1"/>
</dbReference>
<dbReference type="FunFam" id="3.30.70.330:FF:000209">
    <property type="entry name" value="U2 small nuclear ribonucleoprotein auxiliary factor 35 kDa subunit-related protein 2"/>
    <property type="match status" value="1"/>
</dbReference>
<dbReference type="Gene3D" id="3.30.70.330">
    <property type="match status" value="1"/>
</dbReference>
<dbReference type="InterPro" id="IPR012677">
    <property type="entry name" value="Nucleotide-bd_a/b_plait_sf"/>
</dbReference>
<dbReference type="InterPro" id="IPR035979">
    <property type="entry name" value="RBD_domain_sf"/>
</dbReference>
<dbReference type="InterPro" id="IPR000504">
    <property type="entry name" value="RRM_dom"/>
</dbReference>
<dbReference type="InterPro" id="IPR003954">
    <property type="entry name" value="RRM_dom_euk"/>
</dbReference>
<dbReference type="InterPro" id="IPR009145">
    <property type="entry name" value="U2AF_small"/>
</dbReference>
<dbReference type="InterPro" id="IPR000571">
    <property type="entry name" value="Znf_CCCH"/>
</dbReference>
<dbReference type="PANTHER" id="PTHR12620">
    <property type="entry name" value="U2 SNRNP AUXILIARY FACTOR, SMALL SUBUNIT"/>
    <property type="match status" value="1"/>
</dbReference>
<dbReference type="Pfam" id="PF00076">
    <property type="entry name" value="RRM_1"/>
    <property type="match status" value="1"/>
</dbReference>
<dbReference type="Pfam" id="PF00642">
    <property type="entry name" value="zf-CCCH"/>
    <property type="match status" value="1"/>
</dbReference>
<dbReference type="PRINTS" id="PR01848">
    <property type="entry name" value="U2AUXFACTOR"/>
</dbReference>
<dbReference type="SMART" id="SM00361">
    <property type="entry name" value="RRM_1"/>
    <property type="match status" value="1"/>
</dbReference>
<dbReference type="SMART" id="SM00356">
    <property type="entry name" value="ZnF_C3H1"/>
    <property type="match status" value="2"/>
</dbReference>
<dbReference type="SUPFAM" id="SSF54928">
    <property type="entry name" value="RNA-binding domain, RBD"/>
    <property type="match status" value="1"/>
</dbReference>
<dbReference type="PROSITE" id="PS50102">
    <property type="entry name" value="RRM"/>
    <property type="match status" value="1"/>
</dbReference>
<dbReference type="PROSITE" id="PS50103">
    <property type="entry name" value="ZF_C3H1"/>
    <property type="match status" value="2"/>
</dbReference>
<comment type="function">
    <text evidence="5 8">Pre-mRNA-binding protein required for splicing of both U2- and U12-type introns. Selectively interacts with the 3'-splice site of U2- and U12-type pre-mRNAs and promotes different steps in U2 and U12 intron splicing. Recruited to U12 pre-mRNAs in an ATP-dependent manner and is required for assembly of the pre-spliceosome, a precursor to other spliceosomal complexes. For U2-type introns, it is selectively and specifically required for the second step of splicing.</text>
</comment>
<comment type="subunit">
    <text evidence="4 5 8">Component of the U11/U12 snRNPs that are part of the U12-type spliceosome. Interacts (via RS domain) with SRSF1 and SRSF2. Interacts with U2AF2/U2AF65.</text>
</comment>
<comment type="interaction">
    <interactant intactId="EBI-6657923">
        <id>Q15696</id>
    </interactant>
    <interactant intactId="EBI-2836773">
        <id>Q9UK58</id>
        <label>CCNL1</label>
    </interactant>
    <organismsDiffer>false</organismsDiffer>
    <experiments>3</experiments>
</comment>
<comment type="interaction">
    <interactant intactId="EBI-6657923">
        <id>Q15696</id>
    </interactant>
    <interactant intactId="EBI-750020">
        <id>P49760</id>
        <label>CLK2</label>
    </interactant>
    <organismsDiffer>false</organismsDiffer>
    <experiments>8</experiments>
</comment>
<comment type="interaction">
    <interactant intactId="EBI-6657923">
        <id>Q15696</id>
    </interactant>
    <interactant intactId="EBI-739789">
        <id>Q92997</id>
        <label>DVL3</label>
    </interactant>
    <organismsDiffer>false</organismsDiffer>
    <experiments>3</experiments>
</comment>
<comment type="interaction">
    <interactant intactId="EBI-6657923">
        <id>Q15696</id>
    </interactant>
    <interactant intactId="EBI-9089060">
        <id>Q7Z7F0-4</id>
        <label>KHDC4</label>
    </interactant>
    <organismsDiffer>false</organismsDiffer>
    <experiments>3</experiments>
</comment>
<comment type="interaction">
    <interactant intactId="EBI-6657923">
        <id>Q15696</id>
    </interactant>
    <interactant intactId="EBI-352851">
        <id>Q9Y383</id>
        <label>LUC7L2</label>
    </interactant>
    <organismsDiffer>false</organismsDiffer>
    <experiments>3</experiments>
</comment>
<comment type="interaction">
    <interactant intactId="EBI-6657923">
        <id>Q15696</id>
    </interactant>
    <interactant intactId="EBI-12048237">
        <id>Q6BDI9</id>
        <label>REP15</label>
    </interactant>
    <organismsDiffer>false</organismsDiffer>
    <experiments>3</experiments>
</comment>
<comment type="interaction">
    <interactant intactId="EBI-6657923">
        <id>Q15696</id>
    </interactant>
    <interactant intactId="EBI-742426">
        <id>Q9H190</id>
        <label>SDCBP2</label>
    </interactant>
    <organismsDiffer>false</organismsDiffer>
    <experiments>7</experiments>
</comment>
<comment type="interaction">
    <interactant intactId="EBI-6657923">
        <id>Q15696</id>
    </interactant>
    <interactant intactId="EBI-539478">
        <id>Q96SB4</id>
        <label>SRPK1</label>
    </interactant>
    <organismsDiffer>false</organismsDiffer>
    <experiments>3</experiments>
</comment>
<comment type="interaction">
    <interactant intactId="EBI-6657923">
        <id>Q15696</id>
    </interactant>
    <interactant intactId="EBI-593303">
        <id>P78362</id>
        <label>SRPK2</label>
    </interactant>
    <organismsDiffer>false</organismsDiffer>
    <experiments>8</experiments>
</comment>
<comment type="interaction">
    <interactant intactId="EBI-6657923">
        <id>Q15696</id>
    </interactant>
    <interactant intactId="EBI-3867173">
        <id>A7MD48</id>
        <label>SRRM4</label>
    </interactant>
    <organismsDiffer>false</organismsDiffer>
    <experiments>3</experiments>
</comment>
<comment type="interaction">
    <interactant intactId="EBI-6657923">
        <id>Q15696</id>
    </interactant>
    <interactant intactId="EBI-720503">
        <id>Q13243</id>
        <label>SRSF5</label>
    </interactant>
    <organismsDiffer>false</organismsDiffer>
    <experiments>3</experiments>
</comment>
<comment type="interaction">
    <interactant intactId="EBI-6657923">
        <id>Q15696</id>
    </interactant>
    <interactant intactId="EBI-2212028">
        <id>Q9Y2D8</id>
        <label>SSX2IP</label>
    </interactant>
    <organismsDiffer>false</organismsDiffer>
    <experiments>4</experiments>
</comment>
<comment type="interaction">
    <interactant intactId="EBI-6657923">
        <id>Q15696</id>
    </interactant>
    <interactant intactId="EBI-11139477">
        <id>Q96N21</id>
        <label>TEPSIN</label>
    </interactant>
    <organismsDiffer>false</organismsDiffer>
    <experiments>3</experiments>
</comment>
<comment type="interaction">
    <interactant intactId="EBI-6657923">
        <id>Q15696</id>
    </interactant>
    <interactant intactId="EBI-752102">
        <id>Q8WVP5</id>
        <label>TNFAIP8L1</label>
    </interactant>
    <organismsDiffer>false</organismsDiffer>
    <experiments>3</experiments>
</comment>
<comment type="interaction">
    <interactant intactId="EBI-6657923">
        <id>Q15696</id>
    </interactant>
    <interactant intactId="EBI-6657923">
        <id>Q15696</id>
        <label>ZRSR2</label>
    </interactant>
    <organismsDiffer>false</organismsDiffer>
    <experiments>3</experiments>
</comment>
<comment type="interaction">
    <interactant intactId="EBI-6657923">
        <id>Q15696</id>
    </interactant>
    <interactant intactId="EBI-12270264">
        <id>Q15695</id>
        <label>ZRSR2P1</label>
    </interactant>
    <organismsDiffer>false</organismsDiffer>
    <experiments>6</experiments>
</comment>
<comment type="subcellular location">
    <subcellularLocation>
        <location evidence="4">Nucleus</location>
    </subcellularLocation>
</comment>
<comment type="tissue specificity">
    <text evidence="8">Widely expressed.</text>
</comment>
<comment type="PTM">
    <text evidence="8">Phosphorylated in the RS domain by SRPK1.</text>
</comment>
<comment type="disease" evidence="6 7">
    <disease id="DI-06953">
        <name>Orofaciodigital syndrome 21</name>
        <acronym>OFD21</acronym>
        <description>A form of orofaciodigital syndrome, a group of heterogeneous disorders characterized by malformations of the oral cavity, face and digits, and associated phenotypic abnormalities that lead to the delineation of various subtypes. OFD21 is an X-linked recessive form characterized by postaxial polydactyly of the hands, hallux duplication, palatal defects, fused incisors, accessory oral frenula and tongue nodules, in association with brain anomalies that range from pituitary anomalies to alobar holoprosencephaly.</description>
        <dbReference type="MIM" id="301132"/>
    </disease>
    <text>The disease is caused by variants affecting the gene represented in this entry.</text>
</comment>
<name>U2AFM_HUMAN</name>
<proteinExistence type="evidence at protein level"/>
<reference key="1">
    <citation type="journal article" date="1995" name="Genomics">
        <title>Isolation and mapping of human homologues of an imprinted mouse gene U2af1-rs1.</title>
        <authorList>
            <person name="Kitagawa K."/>
            <person name="Wang X."/>
            <person name="Hatada I."/>
            <person name="Yamaoka T."/>
            <person name="Nojima H."/>
            <person name="Inazawa J."/>
            <person name="Abe T."/>
            <person name="Mitsuya K."/>
            <person name="Oshimura M."/>
            <person name="Murata A."/>
            <person name="Monden M."/>
            <person name="Mukai T."/>
        </authorList>
    </citation>
    <scope>NUCLEOTIDE SEQUENCE [MRNA]</scope>
    <source>
        <tissue>Brain</tissue>
    </source>
</reference>
<reference key="2">
    <citation type="journal article" date="2005" name="Nature">
        <title>The DNA sequence of the human X chromosome.</title>
        <authorList>
            <person name="Ross M.T."/>
            <person name="Grafham D.V."/>
            <person name="Coffey A.J."/>
            <person name="Scherer S."/>
            <person name="McLay K."/>
            <person name="Muzny D."/>
            <person name="Platzer M."/>
            <person name="Howell G.R."/>
            <person name="Burrows C."/>
            <person name="Bird C.P."/>
            <person name="Frankish A."/>
            <person name="Lovell F.L."/>
            <person name="Howe K.L."/>
            <person name="Ashurst J.L."/>
            <person name="Fulton R.S."/>
            <person name="Sudbrak R."/>
            <person name="Wen G."/>
            <person name="Jones M.C."/>
            <person name="Hurles M.E."/>
            <person name="Andrews T.D."/>
            <person name="Scott C.E."/>
            <person name="Searle S."/>
            <person name="Ramser J."/>
            <person name="Whittaker A."/>
            <person name="Deadman R."/>
            <person name="Carter N.P."/>
            <person name="Hunt S.E."/>
            <person name="Chen R."/>
            <person name="Cree A."/>
            <person name="Gunaratne P."/>
            <person name="Havlak P."/>
            <person name="Hodgson A."/>
            <person name="Metzker M.L."/>
            <person name="Richards S."/>
            <person name="Scott G."/>
            <person name="Steffen D."/>
            <person name="Sodergren E."/>
            <person name="Wheeler D.A."/>
            <person name="Worley K.C."/>
            <person name="Ainscough R."/>
            <person name="Ambrose K.D."/>
            <person name="Ansari-Lari M.A."/>
            <person name="Aradhya S."/>
            <person name="Ashwell R.I."/>
            <person name="Babbage A.K."/>
            <person name="Bagguley C.L."/>
            <person name="Ballabio A."/>
            <person name="Banerjee R."/>
            <person name="Barker G.E."/>
            <person name="Barlow K.F."/>
            <person name="Barrett I.P."/>
            <person name="Bates K.N."/>
            <person name="Beare D.M."/>
            <person name="Beasley H."/>
            <person name="Beasley O."/>
            <person name="Beck A."/>
            <person name="Bethel G."/>
            <person name="Blechschmidt K."/>
            <person name="Brady N."/>
            <person name="Bray-Allen S."/>
            <person name="Bridgeman A.M."/>
            <person name="Brown A.J."/>
            <person name="Brown M.J."/>
            <person name="Bonnin D."/>
            <person name="Bruford E.A."/>
            <person name="Buhay C."/>
            <person name="Burch P."/>
            <person name="Burford D."/>
            <person name="Burgess J."/>
            <person name="Burrill W."/>
            <person name="Burton J."/>
            <person name="Bye J.M."/>
            <person name="Carder C."/>
            <person name="Carrel L."/>
            <person name="Chako J."/>
            <person name="Chapman J.C."/>
            <person name="Chavez D."/>
            <person name="Chen E."/>
            <person name="Chen G."/>
            <person name="Chen Y."/>
            <person name="Chen Z."/>
            <person name="Chinault C."/>
            <person name="Ciccodicola A."/>
            <person name="Clark S.Y."/>
            <person name="Clarke G."/>
            <person name="Clee C.M."/>
            <person name="Clegg S."/>
            <person name="Clerc-Blankenburg K."/>
            <person name="Clifford K."/>
            <person name="Cobley V."/>
            <person name="Cole C.G."/>
            <person name="Conquer J.S."/>
            <person name="Corby N."/>
            <person name="Connor R.E."/>
            <person name="David R."/>
            <person name="Davies J."/>
            <person name="Davis C."/>
            <person name="Davis J."/>
            <person name="Delgado O."/>
            <person name="Deshazo D."/>
            <person name="Dhami P."/>
            <person name="Ding Y."/>
            <person name="Dinh H."/>
            <person name="Dodsworth S."/>
            <person name="Draper H."/>
            <person name="Dugan-Rocha S."/>
            <person name="Dunham A."/>
            <person name="Dunn M."/>
            <person name="Durbin K.J."/>
            <person name="Dutta I."/>
            <person name="Eades T."/>
            <person name="Ellwood M."/>
            <person name="Emery-Cohen A."/>
            <person name="Errington H."/>
            <person name="Evans K.L."/>
            <person name="Faulkner L."/>
            <person name="Francis F."/>
            <person name="Frankland J."/>
            <person name="Fraser A.E."/>
            <person name="Galgoczy P."/>
            <person name="Gilbert J."/>
            <person name="Gill R."/>
            <person name="Gloeckner G."/>
            <person name="Gregory S.G."/>
            <person name="Gribble S."/>
            <person name="Griffiths C."/>
            <person name="Grocock R."/>
            <person name="Gu Y."/>
            <person name="Gwilliam R."/>
            <person name="Hamilton C."/>
            <person name="Hart E.A."/>
            <person name="Hawes A."/>
            <person name="Heath P.D."/>
            <person name="Heitmann K."/>
            <person name="Hennig S."/>
            <person name="Hernandez J."/>
            <person name="Hinzmann B."/>
            <person name="Ho S."/>
            <person name="Hoffs M."/>
            <person name="Howden P.J."/>
            <person name="Huckle E.J."/>
            <person name="Hume J."/>
            <person name="Hunt P.J."/>
            <person name="Hunt A.R."/>
            <person name="Isherwood J."/>
            <person name="Jacob L."/>
            <person name="Johnson D."/>
            <person name="Jones S."/>
            <person name="de Jong P.J."/>
            <person name="Joseph S.S."/>
            <person name="Keenan S."/>
            <person name="Kelly S."/>
            <person name="Kershaw J.K."/>
            <person name="Khan Z."/>
            <person name="Kioschis P."/>
            <person name="Klages S."/>
            <person name="Knights A.J."/>
            <person name="Kosiura A."/>
            <person name="Kovar-Smith C."/>
            <person name="Laird G.K."/>
            <person name="Langford C."/>
            <person name="Lawlor S."/>
            <person name="Leversha M."/>
            <person name="Lewis L."/>
            <person name="Liu W."/>
            <person name="Lloyd C."/>
            <person name="Lloyd D.M."/>
            <person name="Loulseged H."/>
            <person name="Loveland J.E."/>
            <person name="Lovell J.D."/>
            <person name="Lozado R."/>
            <person name="Lu J."/>
            <person name="Lyne R."/>
            <person name="Ma J."/>
            <person name="Maheshwari M."/>
            <person name="Matthews L.H."/>
            <person name="McDowall J."/>
            <person name="McLaren S."/>
            <person name="McMurray A."/>
            <person name="Meidl P."/>
            <person name="Meitinger T."/>
            <person name="Milne S."/>
            <person name="Miner G."/>
            <person name="Mistry S.L."/>
            <person name="Morgan M."/>
            <person name="Morris S."/>
            <person name="Mueller I."/>
            <person name="Mullikin J.C."/>
            <person name="Nguyen N."/>
            <person name="Nordsiek G."/>
            <person name="Nyakatura G."/>
            <person name="O'dell C.N."/>
            <person name="Okwuonu G."/>
            <person name="Palmer S."/>
            <person name="Pandian R."/>
            <person name="Parker D."/>
            <person name="Parrish J."/>
            <person name="Pasternak S."/>
            <person name="Patel D."/>
            <person name="Pearce A.V."/>
            <person name="Pearson D.M."/>
            <person name="Pelan S.E."/>
            <person name="Perez L."/>
            <person name="Porter K.M."/>
            <person name="Ramsey Y."/>
            <person name="Reichwald K."/>
            <person name="Rhodes S."/>
            <person name="Ridler K.A."/>
            <person name="Schlessinger D."/>
            <person name="Schueler M.G."/>
            <person name="Sehra H.K."/>
            <person name="Shaw-Smith C."/>
            <person name="Shen H."/>
            <person name="Sheridan E.M."/>
            <person name="Shownkeen R."/>
            <person name="Skuce C.D."/>
            <person name="Smith M.L."/>
            <person name="Sotheran E.C."/>
            <person name="Steingruber H.E."/>
            <person name="Steward C.A."/>
            <person name="Storey R."/>
            <person name="Swann R.M."/>
            <person name="Swarbreck D."/>
            <person name="Tabor P.E."/>
            <person name="Taudien S."/>
            <person name="Taylor T."/>
            <person name="Teague B."/>
            <person name="Thomas K."/>
            <person name="Thorpe A."/>
            <person name="Timms K."/>
            <person name="Tracey A."/>
            <person name="Trevanion S."/>
            <person name="Tromans A.C."/>
            <person name="d'Urso M."/>
            <person name="Verduzco D."/>
            <person name="Villasana D."/>
            <person name="Waldron L."/>
            <person name="Wall M."/>
            <person name="Wang Q."/>
            <person name="Warren J."/>
            <person name="Warry G.L."/>
            <person name="Wei X."/>
            <person name="West A."/>
            <person name="Whitehead S.L."/>
            <person name="Whiteley M.N."/>
            <person name="Wilkinson J.E."/>
            <person name="Willey D.L."/>
            <person name="Williams G."/>
            <person name="Williams L."/>
            <person name="Williamson A."/>
            <person name="Williamson H."/>
            <person name="Wilming L."/>
            <person name="Woodmansey R.L."/>
            <person name="Wray P.W."/>
            <person name="Yen J."/>
            <person name="Zhang J."/>
            <person name="Zhou J."/>
            <person name="Zoghbi H."/>
            <person name="Zorilla S."/>
            <person name="Buck D."/>
            <person name="Reinhardt R."/>
            <person name="Poustka A."/>
            <person name="Rosenthal A."/>
            <person name="Lehrach H."/>
            <person name="Meindl A."/>
            <person name="Minx P.J."/>
            <person name="Hillier L.W."/>
            <person name="Willard H.F."/>
            <person name="Wilson R.K."/>
            <person name="Waterston R.H."/>
            <person name="Rice C.M."/>
            <person name="Vaudin M."/>
            <person name="Coulson A."/>
            <person name="Nelson D.L."/>
            <person name="Weinstock G."/>
            <person name="Sulston J.E."/>
            <person name="Durbin R.M."/>
            <person name="Hubbard T."/>
            <person name="Gibbs R.A."/>
            <person name="Beck S."/>
            <person name="Rogers J."/>
            <person name="Bentley D.R."/>
        </authorList>
    </citation>
    <scope>NUCLEOTIDE SEQUENCE [LARGE SCALE GENOMIC DNA]</scope>
</reference>
<reference key="3">
    <citation type="journal article" date="2004" name="Genome Res.">
        <title>The status, quality, and expansion of the NIH full-length cDNA project: the Mammalian Gene Collection (MGC).</title>
        <authorList>
            <consortium name="The MGC Project Team"/>
        </authorList>
    </citation>
    <scope>NUCLEOTIDE SEQUENCE [LARGE SCALE MRNA]</scope>
</reference>
<reference key="4">
    <citation type="journal article" date="1997" name="Nature">
        <title>A protein related to splicing factor U2AF35 that interacts with U2AF65 and SR proteins in splicing of pre-mRNA.</title>
        <authorList>
            <person name="Tronchere H."/>
            <person name="Wang J."/>
            <person name="Fu X.D."/>
        </authorList>
    </citation>
    <scope>FUNCTION</scope>
    <scope>TISSUE SPECIFICITY</scope>
    <scope>PHOSPHORYLATION</scope>
    <scope>INTERACTION WITH SRSF1; SRSF2; SRPK1 AND U2AF2</scope>
</reference>
<reference key="5">
    <citation type="journal article" date="1999" name="Int. J. Cancer">
        <title>Antigens recognized by autologous antibody in patients with renal-cell carcinoma.</title>
        <authorList>
            <person name="Scanlan M.J."/>
            <person name="Gordan J.D."/>
            <person name="Williamson B."/>
            <person name="Stockert E."/>
            <person name="Bander N.H."/>
            <person name="Jongeneel C.V."/>
            <person name="Gure A.O."/>
            <person name="Jaeger D."/>
            <person name="Jaeger E."/>
            <person name="Knuth A."/>
            <person name="Chen Y.-T."/>
            <person name="Old L.J."/>
        </authorList>
    </citation>
    <scope>IDENTIFICATION AS A RENAL CANCER ANTIGEN</scope>
    <source>
        <tissue>Renal cell carcinoma</tissue>
    </source>
</reference>
<reference key="6">
    <citation type="journal article" date="2004" name="RNA">
        <title>The human 18S U11/U12 snRNP contains a set of novel proteins not found in the U2-dependent spliceosome.</title>
        <authorList>
            <person name="Will C.L."/>
            <person name="Schneider C."/>
            <person name="Hossbach M."/>
            <person name="Urlaub H."/>
            <person name="Rauhut R."/>
            <person name="Elbashir S."/>
            <person name="Tuschl T."/>
            <person name="Luehrmann R."/>
        </authorList>
    </citation>
    <scope>IDENTIFICATION IN THE U11/U12 SPLICEOSOME COMPLEX</scope>
    <scope>IDENTIFICATION BY MASS SPECTROMETRY</scope>
    <scope>SUBCELLULAR LOCATION</scope>
</reference>
<reference key="7">
    <citation type="journal article" date="2006" name="Cell">
        <title>Global, in vivo, and site-specific phosphorylation dynamics in signaling networks.</title>
        <authorList>
            <person name="Olsen J.V."/>
            <person name="Blagoev B."/>
            <person name="Gnad F."/>
            <person name="Macek B."/>
            <person name="Kumar C."/>
            <person name="Mortensen P."/>
            <person name="Mann M."/>
        </authorList>
    </citation>
    <scope>PHOSPHORYLATION [LARGE SCALE ANALYSIS] AT SER-384</scope>
    <scope>IDENTIFICATION BY MASS SPECTROMETRY [LARGE SCALE ANALYSIS]</scope>
    <source>
        <tissue>Cervix carcinoma</tissue>
    </source>
</reference>
<reference key="8">
    <citation type="journal article" date="2008" name="Proc. Natl. Acad. Sci. U.S.A.">
        <title>A quantitative atlas of mitotic phosphorylation.</title>
        <authorList>
            <person name="Dephoure N."/>
            <person name="Zhou C."/>
            <person name="Villen J."/>
            <person name="Beausoleil S.A."/>
            <person name="Bakalarski C.E."/>
            <person name="Elledge S.J."/>
            <person name="Gygi S.P."/>
        </authorList>
    </citation>
    <scope>PHOSPHORYLATION [LARGE SCALE ANALYSIS] AT SER-349</scope>
    <scope>IDENTIFICATION BY MASS SPECTROMETRY [LARGE SCALE ANALYSIS]</scope>
    <source>
        <tissue>Cervix carcinoma</tissue>
    </source>
</reference>
<reference key="9">
    <citation type="journal article" date="2010" name="Genes Dev.">
        <title>The U2AF35-related protein Urp contacts the 3' splice site to promote U12-type intron splicing and the second step of U2-type intron splicing.</title>
        <authorList>
            <person name="Shen H."/>
            <person name="Zheng X."/>
            <person name="Luecke S."/>
            <person name="Green M.R."/>
        </authorList>
    </citation>
    <scope>FUNCTION</scope>
    <scope>IDENTIFICATION IN THE U11/U12 SPLICEOSOME COMPLEX</scope>
    <scope>RNA-BINDING</scope>
</reference>
<reference key="10">
    <citation type="journal article" date="2010" name="Sci. Signal.">
        <title>Quantitative phosphoproteomics reveals widespread full phosphorylation site occupancy during mitosis.</title>
        <authorList>
            <person name="Olsen J.V."/>
            <person name="Vermeulen M."/>
            <person name="Santamaria A."/>
            <person name="Kumar C."/>
            <person name="Miller M.L."/>
            <person name="Jensen L.J."/>
            <person name="Gnad F."/>
            <person name="Cox J."/>
            <person name="Jensen T.S."/>
            <person name="Nigg E.A."/>
            <person name="Brunak S."/>
            <person name="Mann M."/>
        </authorList>
    </citation>
    <scope>PHOSPHORYLATION [LARGE SCALE ANALYSIS] AT SER-349</scope>
    <scope>IDENTIFICATION BY MASS SPECTROMETRY [LARGE SCALE ANALYSIS]</scope>
    <source>
        <tissue>Cervix carcinoma</tissue>
    </source>
</reference>
<reference key="11">
    <citation type="journal article" date="2011" name="Sci. Signal.">
        <title>System-wide temporal characterization of the proteome and phosphoproteome of human embryonic stem cell differentiation.</title>
        <authorList>
            <person name="Rigbolt K.T."/>
            <person name="Prokhorova T.A."/>
            <person name="Akimov V."/>
            <person name="Henningsen J."/>
            <person name="Johansen P.T."/>
            <person name="Kratchmarova I."/>
            <person name="Kassem M."/>
            <person name="Mann M."/>
            <person name="Olsen J.V."/>
            <person name="Blagoev B."/>
        </authorList>
    </citation>
    <scope>PHOSPHORYLATION [LARGE SCALE ANALYSIS] AT SER-384</scope>
    <scope>IDENTIFICATION BY MASS SPECTROMETRY [LARGE SCALE ANALYSIS]</scope>
</reference>
<reference key="12">
    <citation type="journal article" date="2013" name="J. Proteome Res.">
        <title>Toward a comprehensive characterization of a human cancer cell phosphoproteome.</title>
        <authorList>
            <person name="Zhou H."/>
            <person name="Di Palma S."/>
            <person name="Preisinger C."/>
            <person name="Peng M."/>
            <person name="Polat A.N."/>
            <person name="Heck A.J."/>
            <person name="Mohammed S."/>
        </authorList>
    </citation>
    <scope>PHOSPHORYLATION [LARGE SCALE ANALYSIS] AT SER-349</scope>
    <scope>IDENTIFICATION BY MASS SPECTROMETRY [LARGE SCALE ANALYSIS]</scope>
    <source>
        <tissue>Cervix carcinoma</tissue>
        <tissue>Erythroleukemia</tissue>
    </source>
</reference>
<reference key="13">
    <citation type="journal article" date="2017" name="Nat. Struct. Mol. Biol.">
        <title>Site-specific mapping of the human SUMO proteome reveals co-modification with phosphorylation.</title>
        <authorList>
            <person name="Hendriks I.A."/>
            <person name="Lyon D."/>
            <person name="Young C."/>
            <person name="Jensen L.J."/>
            <person name="Vertegaal A.C."/>
            <person name="Nielsen M.L."/>
        </authorList>
    </citation>
    <scope>SUMOYLATION [LARGE SCALE ANALYSIS] AT LYS-45 AND LYS-62</scope>
    <scope>IDENTIFICATION BY MASS SPECTROMETRY [LARGE SCALE ANALYSIS]</scope>
</reference>
<reference key="14">
    <citation type="journal article" date="2020" name="Hum. Mutat.">
        <title>Trio-whole-exome sequencing and preimplantation genetic diagnosis for unexplained recurrent fetal malformations.</title>
        <authorList>
            <person name="Guo W."/>
            <person name="Lai Y."/>
            <person name="Yan Z."/>
            <person name="Wang Y."/>
            <person name="Nie Y."/>
            <person name="Guan S."/>
            <person name="Kuo Y."/>
            <person name="Zhang W."/>
            <person name="Zhu X."/>
            <person name="Peng M."/>
            <person name="Zhi X."/>
            <person name="Wei Y."/>
            <person name="Yan L."/>
            <person name="Qiao J."/>
        </authorList>
    </citation>
    <scope>INVOLVEMENT IN OFD21</scope>
</reference>
<reference key="15">
    <citation type="journal article" date="2024" name="Genet. Med.">
        <title>Differential alternative splicing analysis links variation in ZRSR2 to a novel type of oral-facial-digital syndrome.</title>
        <authorList>
            <person name="Hannes L."/>
            <person name="Atzori M."/>
            <person name="Goldenberg A."/>
            <person name="Argente J."/>
            <person name="Attie-Bitach T."/>
            <person name="Amiel J."/>
            <person name="Attanasio C."/>
            <person name="Braslavsky D.G."/>
            <person name="Bruel A.L."/>
            <person name="Castanet M."/>
            <person name="Dubourg C."/>
            <person name="Jacobs A."/>
            <person name="Lyonnet S."/>
            <person name="Martinez-Mayer J."/>
            <person name="Perez Millan M.I."/>
            <person name="Pezzella N."/>
            <person name="Pelgrims E."/>
            <person name="Aerden M."/>
            <person name="Bauters M."/>
            <person name="Rochtus A."/>
            <person name="Scaglia P."/>
            <person name="Swillen A."/>
            <person name="Sifrim A."/>
            <person name="Tammaro R."/>
            <person name="Mau-Them F.T."/>
            <person name="Odent S."/>
            <person name="Thauvin-Robinet C."/>
            <person name="Franco B."/>
            <person name="Breckpot J."/>
        </authorList>
    </citation>
    <scope>INVOLVEMENT IN OFD21</scope>
</reference>
<feature type="chain" id="PRO_0000082001" description="U2 small nuclear ribonucleoprotein auxiliary factor 35 kDa subunit-related protein 2">
    <location>
        <begin position="1"/>
        <end position="482"/>
    </location>
</feature>
<feature type="domain" description="RRM" evidence="1">
    <location>
        <begin position="198"/>
        <end position="304"/>
    </location>
</feature>
<feature type="zinc finger region" description="C3H1-type 1" evidence="2">
    <location>
        <begin position="166"/>
        <end position="194"/>
    </location>
</feature>
<feature type="zinc finger region" description="C3H1-type 2" evidence="2">
    <location>
        <begin position="306"/>
        <end position="333"/>
    </location>
</feature>
<feature type="region of interest" description="Disordered" evidence="3">
    <location>
        <begin position="1"/>
        <end position="59"/>
    </location>
</feature>
<feature type="region of interest" description="Disordered" evidence="3">
    <location>
        <begin position="115"/>
        <end position="135"/>
    </location>
</feature>
<feature type="region of interest" description="Disordered" evidence="3">
    <location>
        <begin position="351"/>
        <end position="482"/>
    </location>
</feature>
<feature type="compositionally biased region" description="Basic residues" evidence="3">
    <location>
        <begin position="14"/>
        <end position="31"/>
    </location>
</feature>
<feature type="compositionally biased region" description="Acidic residues" evidence="3">
    <location>
        <begin position="46"/>
        <end position="58"/>
    </location>
</feature>
<feature type="compositionally biased region" description="Basic and acidic residues" evidence="3">
    <location>
        <begin position="360"/>
        <end position="375"/>
    </location>
</feature>
<feature type="compositionally biased region" description="Basic and acidic residues" evidence="3">
    <location>
        <begin position="383"/>
        <end position="398"/>
    </location>
</feature>
<feature type="compositionally biased region" description="Basic residues" evidence="3">
    <location>
        <begin position="399"/>
        <end position="412"/>
    </location>
</feature>
<feature type="compositionally biased region" description="Basic and acidic residues" evidence="3">
    <location>
        <begin position="413"/>
        <end position="435"/>
    </location>
</feature>
<feature type="compositionally biased region" description="Basic residues" evidence="3">
    <location>
        <begin position="436"/>
        <end position="454"/>
    </location>
</feature>
<feature type="modified residue" description="Phosphoserine" evidence="10 11 13">
    <location>
        <position position="349"/>
    </location>
</feature>
<feature type="modified residue" description="Phosphoserine" evidence="9 12">
    <location>
        <position position="384"/>
    </location>
</feature>
<feature type="cross-link" description="Glycyl lysine isopeptide (Lys-Gly) (interchain with G-Cter in SUMO2)" evidence="14">
    <location>
        <position position="45"/>
    </location>
</feature>
<feature type="cross-link" description="Glycyl lysine isopeptide (Lys-Gly) (interchain with G-Cter in SUMO2)" evidence="14">
    <location>
        <position position="62"/>
    </location>
</feature>
<accession>Q15696</accession>
<accession>Q14D69</accession>
<keyword id="KW-1186">Ciliopathy</keyword>
<keyword id="KW-1017">Isopeptide bond</keyword>
<keyword id="KW-0479">Metal-binding</keyword>
<keyword id="KW-0507">mRNA processing</keyword>
<keyword id="KW-0508">mRNA splicing</keyword>
<keyword id="KW-0539">Nucleus</keyword>
<keyword id="KW-0597">Phosphoprotein</keyword>
<keyword id="KW-1267">Proteomics identification</keyword>
<keyword id="KW-1185">Reference proteome</keyword>
<keyword id="KW-0677">Repeat</keyword>
<keyword id="KW-0687">Ribonucleoprotein</keyword>
<keyword id="KW-0694">RNA-binding</keyword>
<keyword id="KW-0747">Spliceosome</keyword>
<keyword id="KW-0832">Ubl conjugation</keyword>
<keyword id="KW-0862">Zinc</keyword>
<keyword id="KW-0863">Zinc-finger</keyword>
<organism>
    <name type="scientific">Homo sapiens</name>
    <name type="common">Human</name>
    <dbReference type="NCBI Taxonomy" id="9606"/>
    <lineage>
        <taxon>Eukaryota</taxon>
        <taxon>Metazoa</taxon>
        <taxon>Chordata</taxon>
        <taxon>Craniata</taxon>
        <taxon>Vertebrata</taxon>
        <taxon>Euteleostomi</taxon>
        <taxon>Mammalia</taxon>
        <taxon>Eutheria</taxon>
        <taxon>Euarchontoglires</taxon>
        <taxon>Primates</taxon>
        <taxon>Haplorrhini</taxon>
        <taxon>Catarrhini</taxon>
        <taxon>Hominidae</taxon>
        <taxon>Homo</taxon>
    </lineage>
</organism>